<proteinExistence type="inferred from homology"/>
<evidence type="ECO:0000255" key="1">
    <source>
        <dbReference type="HAMAP-Rule" id="MF_01690"/>
    </source>
</evidence>
<reference key="1">
    <citation type="journal article" date="2005" name="Proc. Natl. Acad. Sci. U.S.A.">
        <title>The psychrophilic lifestyle as revealed by the genome sequence of Colwellia psychrerythraea 34H through genomic and proteomic analyses.</title>
        <authorList>
            <person name="Methe B.A."/>
            <person name="Nelson K.E."/>
            <person name="Deming J.W."/>
            <person name="Momen B."/>
            <person name="Melamud E."/>
            <person name="Zhang X."/>
            <person name="Moult J."/>
            <person name="Madupu R."/>
            <person name="Nelson W.C."/>
            <person name="Dodson R.J."/>
            <person name="Brinkac L.M."/>
            <person name="Daugherty S.C."/>
            <person name="Durkin A.S."/>
            <person name="DeBoy R.T."/>
            <person name="Kolonay J.F."/>
            <person name="Sullivan S.A."/>
            <person name="Zhou L."/>
            <person name="Davidsen T.M."/>
            <person name="Wu M."/>
            <person name="Huston A.L."/>
            <person name="Lewis M."/>
            <person name="Weaver B."/>
            <person name="Weidman J.F."/>
            <person name="Khouri H."/>
            <person name="Utterback T.R."/>
            <person name="Feldblyum T.V."/>
            <person name="Fraser C.M."/>
        </authorList>
    </citation>
    <scope>NUCLEOTIDE SEQUENCE [LARGE SCALE GENOMIC DNA]</scope>
    <source>
        <strain>34H / ATCC BAA-681</strain>
    </source>
</reference>
<sequence>MSKIEQKNQSEVIKLAIDLMSRASVTPEDAGCQKLMAQRLAQLGFTNESMIFADTTNLWSRRDSTNATKEDDLVFCFAGHTDVVPAGNLELWNTPPFEPTIIDGMLYGRGAADMKGSLAAMIVATERFVQDHPDHHGSITYLITSDEEGPFINGTTKVIDTLEARNEKITYCIVGEPSSTHAVGDIVKNGRRGSISAEVDIKGKQGHVAYPDHVRNPIHLAMPALTELSQVQWDNGNDYFPATSFQLSNINAGTGATNVVPGHINALFNLRYSTELTDQIIVEQVESILDKHQLDYDIKWTFNGKPFITEHVESEHGFLNAVSQAILSVTGTETQLSTSGGTSDGRFIAPTGAQVIELGPCNATIHQVNESVSCDDLEKLVDIYYHCLVNVLCTHKTIS</sequence>
<keyword id="KW-0028">Amino-acid biosynthesis</keyword>
<keyword id="KW-0170">Cobalt</keyword>
<keyword id="KW-0220">Diaminopimelate biosynthesis</keyword>
<keyword id="KW-0378">Hydrolase</keyword>
<keyword id="KW-0457">Lysine biosynthesis</keyword>
<keyword id="KW-0479">Metal-binding</keyword>
<keyword id="KW-0862">Zinc</keyword>
<protein>
    <recommendedName>
        <fullName evidence="1">Succinyl-diaminopimelate desuccinylase</fullName>
        <shortName evidence="1">SDAP desuccinylase</shortName>
        <ecNumber evidence="1">3.5.1.18</ecNumber>
    </recommendedName>
    <alternativeName>
        <fullName evidence="1">N-succinyl-LL-2,6-diaminoheptanedioate amidohydrolase</fullName>
    </alternativeName>
</protein>
<feature type="chain" id="PRO_0000375533" description="Succinyl-diaminopimelate desuccinylase">
    <location>
        <begin position="1"/>
        <end position="399"/>
    </location>
</feature>
<feature type="active site" evidence="1">
    <location>
        <position position="82"/>
    </location>
</feature>
<feature type="active site" description="Proton acceptor" evidence="1">
    <location>
        <position position="147"/>
    </location>
</feature>
<feature type="binding site" evidence="1">
    <location>
        <position position="80"/>
    </location>
    <ligand>
        <name>Zn(2+)</name>
        <dbReference type="ChEBI" id="CHEBI:29105"/>
        <label>1</label>
    </ligand>
</feature>
<feature type="binding site" evidence="1">
    <location>
        <position position="113"/>
    </location>
    <ligand>
        <name>Zn(2+)</name>
        <dbReference type="ChEBI" id="CHEBI:29105"/>
        <label>1</label>
    </ligand>
</feature>
<feature type="binding site" evidence="1">
    <location>
        <position position="113"/>
    </location>
    <ligand>
        <name>Zn(2+)</name>
        <dbReference type="ChEBI" id="CHEBI:29105"/>
        <label>2</label>
    </ligand>
</feature>
<feature type="binding site" evidence="1">
    <location>
        <position position="148"/>
    </location>
    <ligand>
        <name>Zn(2+)</name>
        <dbReference type="ChEBI" id="CHEBI:29105"/>
        <label>2</label>
    </ligand>
</feature>
<feature type="binding site" evidence="1">
    <location>
        <position position="176"/>
    </location>
    <ligand>
        <name>Zn(2+)</name>
        <dbReference type="ChEBI" id="CHEBI:29105"/>
        <label>1</label>
    </ligand>
</feature>
<feature type="binding site" evidence="1">
    <location>
        <position position="366"/>
    </location>
    <ligand>
        <name>Zn(2+)</name>
        <dbReference type="ChEBI" id="CHEBI:29105"/>
        <label>2</label>
    </ligand>
</feature>
<gene>
    <name evidence="1" type="primary">dapE</name>
    <name type="ordered locus">CPS_3179</name>
</gene>
<accession>Q47Z95</accession>
<organism>
    <name type="scientific">Colwellia psychrerythraea (strain 34H / ATCC BAA-681)</name>
    <name type="common">Vibrio psychroerythus</name>
    <dbReference type="NCBI Taxonomy" id="167879"/>
    <lineage>
        <taxon>Bacteria</taxon>
        <taxon>Pseudomonadati</taxon>
        <taxon>Pseudomonadota</taxon>
        <taxon>Gammaproteobacteria</taxon>
        <taxon>Alteromonadales</taxon>
        <taxon>Colwelliaceae</taxon>
        <taxon>Colwellia</taxon>
    </lineage>
</organism>
<comment type="function">
    <text evidence="1">Catalyzes the hydrolysis of N-succinyl-L,L-diaminopimelic acid (SDAP), forming succinate and LL-2,6-diaminopimelate (DAP), an intermediate involved in the bacterial biosynthesis of lysine and meso-diaminopimelic acid, an essential component of bacterial cell walls.</text>
</comment>
<comment type="catalytic activity">
    <reaction evidence="1">
        <text>N-succinyl-(2S,6S)-2,6-diaminopimelate + H2O = (2S,6S)-2,6-diaminopimelate + succinate</text>
        <dbReference type="Rhea" id="RHEA:22608"/>
        <dbReference type="ChEBI" id="CHEBI:15377"/>
        <dbReference type="ChEBI" id="CHEBI:30031"/>
        <dbReference type="ChEBI" id="CHEBI:57609"/>
        <dbReference type="ChEBI" id="CHEBI:58087"/>
        <dbReference type="EC" id="3.5.1.18"/>
    </reaction>
</comment>
<comment type="cofactor">
    <cofactor evidence="1">
        <name>Zn(2+)</name>
        <dbReference type="ChEBI" id="CHEBI:29105"/>
    </cofactor>
    <cofactor evidence="1">
        <name>Co(2+)</name>
        <dbReference type="ChEBI" id="CHEBI:48828"/>
    </cofactor>
    <text evidence="1">Binds 2 Zn(2+) or Co(2+) ions per subunit.</text>
</comment>
<comment type="pathway">
    <text evidence="1">Amino-acid biosynthesis; L-lysine biosynthesis via DAP pathway; LL-2,6-diaminopimelate from (S)-tetrahydrodipicolinate (succinylase route): step 3/3.</text>
</comment>
<comment type="subunit">
    <text evidence="1">Homodimer.</text>
</comment>
<comment type="similarity">
    <text evidence="1">Belongs to the peptidase M20A family. DapE subfamily.</text>
</comment>
<dbReference type="EC" id="3.5.1.18" evidence="1"/>
<dbReference type="EMBL" id="CP000083">
    <property type="protein sequence ID" value="AAZ24835.1"/>
    <property type="molecule type" value="Genomic_DNA"/>
</dbReference>
<dbReference type="RefSeq" id="WP_011043962.1">
    <property type="nucleotide sequence ID" value="NC_003910.7"/>
</dbReference>
<dbReference type="SMR" id="Q47Z95"/>
<dbReference type="STRING" id="167879.CPS_3179"/>
<dbReference type="KEGG" id="cps:CPS_3179"/>
<dbReference type="eggNOG" id="COG0624">
    <property type="taxonomic scope" value="Bacteria"/>
</dbReference>
<dbReference type="HOGENOM" id="CLU_021802_4_0_6"/>
<dbReference type="UniPathway" id="UPA00034">
    <property type="reaction ID" value="UER00021"/>
</dbReference>
<dbReference type="Proteomes" id="UP000000547">
    <property type="component" value="Chromosome"/>
</dbReference>
<dbReference type="GO" id="GO:0008777">
    <property type="term" value="F:acetylornithine deacetylase activity"/>
    <property type="evidence" value="ECO:0007669"/>
    <property type="project" value="TreeGrafter"/>
</dbReference>
<dbReference type="GO" id="GO:0050897">
    <property type="term" value="F:cobalt ion binding"/>
    <property type="evidence" value="ECO:0007669"/>
    <property type="project" value="UniProtKB-UniRule"/>
</dbReference>
<dbReference type="GO" id="GO:0009014">
    <property type="term" value="F:succinyl-diaminopimelate desuccinylase activity"/>
    <property type="evidence" value="ECO:0007669"/>
    <property type="project" value="UniProtKB-UniRule"/>
</dbReference>
<dbReference type="GO" id="GO:0008270">
    <property type="term" value="F:zinc ion binding"/>
    <property type="evidence" value="ECO:0007669"/>
    <property type="project" value="UniProtKB-UniRule"/>
</dbReference>
<dbReference type="GO" id="GO:0019877">
    <property type="term" value="P:diaminopimelate biosynthetic process"/>
    <property type="evidence" value="ECO:0007669"/>
    <property type="project" value="UniProtKB-UniRule"/>
</dbReference>
<dbReference type="GO" id="GO:0006526">
    <property type="term" value="P:L-arginine biosynthetic process"/>
    <property type="evidence" value="ECO:0007669"/>
    <property type="project" value="TreeGrafter"/>
</dbReference>
<dbReference type="GO" id="GO:0009089">
    <property type="term" value="P:lysine biosynthetic process via diaminopimelate"/>
    <property type="evidence" value="ECO:0007669"/>
    <property type="project" value="UniProtKB-UniRule"/>
</dbReference>
<dbReference type="CDD" id="cd03891">
    <property type="entry name" value="M20_DapE_proteobac"/>
    <property type="match status" value="1"/>
</dbReference>
<dbReference type="FunFam" id="3.40.630.10:FF:000005">
    <property type="entry name" value="Succinyl-diaminopimelate desuccinylase"/>
    <property type="match status" value="1"/>
</dbReference>
<dbReference type="Gene3D" id="1.10.150.900">
    <property type="match status" value="1"/>
</dbReference>
<dbReference type="Gene3D" id="3.30.70.360">
    <property type="match status" value="1"/>
</dbReference>
<dbReference type="Gene3D" id="3.40.630.10">
    <property type="entry name" value="Zn peptidases"/>
    <property type="match status" value="1"/>
</dbReference>
<dbReference type="HAMAP" id="MF_01690">
    <property type="entry name" value="DapE"/>
    <property type="match status" value="1"/>
</dbReference>
<dbReference type="InterPro" id="IPR036264">
    <property type="entry name" value="Bact_exopeptidase_dim_dom"/>
</dbReference>
<dbReference type="InterPro" id="IPR005941">
    <property type="entry name" value="DapE_proteobac"/>
</dbReference>
<dbReference type="InterPro" id="IPR002933">
    <property type="entry name" value="Peptidase_M20"/>
</dbReference>
<dbReference type="InterPro" id="IPR011650">
    <property type="entry name" value="Peptidase_M20_dimer"/>
</dbReference>
<dbReference type="InterPro" id="IPR050072">
    <property type="entry name" value="Peptidase_M20A"/>
</dbReference>
<dbReference type="NCBIfam" id="TIGR01246">
    <property type="entry name" value="dapE_proteo"/>
    <property type="match status" value="1"/>
</dbReference>
<dbReference type="NCBIfam" id="NF009557">
    <property type="entry name" value="PRK13009.1"/>
    <property type="match status" value="1"/>
</dbReference>
<dbReference type="PANTHER" id="PTHR43808">
    <property type="entry name" value="ACETYLORNITHINE DEACETYLASE"/>
    <property type="match status" value="1"/>
</dbReference>
<dbReference type="PANTHER" id="PTHR43808:SF31">
    <property type="entry name" value="N-ACETYL-L-CITRULLINE DEACETYLASE"/>
    <property type="match status" value="1"/>
</dbReference>
<dbReference type="Pfam" id="PF07687">
    <property type="entry name" value="M20_dimer"/>
    <property type="match status" value="1"/>
</dbReference>
<dbReference type="Pfam" id="PF01546">
    <property type="entry name" value="Peptidase_M20"/>
    <property type="match status" value="1"/>
</dbReference>
<dbReference type="SUPFAM" id="SSF55031">
    <property type="entry name" value="Bacterial exopeptidase dimerisation domain"/>
    <property type="match status" value="1"/>
</dbReference>
<dbReference type="SUPFAM" id="SSF53187">
    <property type="entry name" value="Zn-dependent exopeptidases"/>
    <property type="match status" value="1"/>
</dbReference>
<name>DAPE_COLP3</name>